<dbReference type="EC" id="4.1.1.48"/>
<dbReference type="EMBL" id="BA000002">
    <property type="protein sequence ID" value="BAA81563.1"/>
    <property type="molecule type" value="Genomic_DNA"/>
</dbReference>
<dbReference type="PIR" id="C72488">
    <property type="entry name" value="C72488"/>
</dbReference>
<dbReference type="RefSeq" id="WP_010867076.1">
    <property type="nucleotide sequence ID" value="NC_000854.2"/>
</dbReference>
<dbReference type="SMR" id="Q9Y8T7"/>
<dbReference type="STRING" id="272557.APE_2546"/>
<dbReference type="EnsemblBacteria" id="BAA81563">
    <property type="protein sequence ID" value="BAA81563"/>
    <property type="gene ID" value="APE_2546"/>
</dbReference>
<dbReference type="GeneID" id="1445492"/>
<dbReference type="KEGG" id="ape:APE_2546"/>
<dbReference type="PATRIC" id="fig|272557.25.peg.1690"/>
<dbReference type="eggNOG" id="arCOG01088">
    <property type="taxonomic scope" value="Archaea"/>
</dbReference>
<dbReference type="UniPathway" id="UPA00035">
    <property type="reaction ID" value="UER00043"/>
</dbReference>
<dbReference type="Proteomes" id="UP000002518">
    <property type="component" value="Chromosome"/>
</dbReference>
<dbReference type="GO" id="GO:0004425">
    <property type="term" value="F:indole-3-glycerol-phosphate synthase activity"/>
    <property type="evidence" value="ECO:0007669"/>
    <property type="project" value="UniProtKB-UniRule"/>
</dbReference>
<dbReference type="GO" id="GO:0004640">
    <property type="term" value="F:phosphoribosylanthranilate isomerase activity"/>
    <property type="evidence" value="ECO:0007669"/>
    <property type="project" value="TreeGrafter"/>
</dbReference>
<dbReference type="GO" id="GO:0000162">
    <property type="term" value="P:L-tryptophan biosynthetic process"/>
    <property type="evidence" value="ECO:0007669"/>
    <property type="project" value="UniProtKB-UniRule"/>
</dbReference>
<dbReference type="CDD" id="cd00331">
    <property type="entry name" value="IGPS"/>
    <property type="match status" value="1"/>
</dbReference>
<dbReference type="Gene3D" id="3.20.20.70">
    <property type="entry name" value="Aldolase class I"/>
    <property type="match status" value="1"/>
</dbReference>
<dbReference type="HAMAP" id="MF_00134_A">
    <property type="entry name" value="IGPS_A"/>
    <property type="match status" value="1"/>
</dbReference>
<dbReference type="InterPro" id="IPR013785">
    <property type="entry name" value="Aldolase_TIM"/>
</dbReference>
<dbReference type="InterPro" id="IPR045186">
    <property type="entry name" value="Indole-3-glycerol_P_synth"/>
</dbReference>
<dbReference type="InterPro" id="IPR013798">
    <property type="entry name" value="Indole-3-glycerol_P_synth_dom"/>
</dbReference>
<dbReference type="InterPro" id="IPR001468">
    <property type="entry name" value="Indole-3-GlycerolPSynthase_CS"/>
</dbReference>
<dbReference type="InterPro" id="IPR011060">
    <property type="entry name" value="RibuloseP-bd_barrel"/>
</dbReference>
<dbReference type="PANTHER" id="PTHR22854:SF2">
    <property type="entry name" value="INDOLE-3-GLYCEROL-PHOSPHATE SYNTHASE"/>
    <property type="match status" value="1"/>
</dbReference>
<dbReference type="PANTHER" id="PTHR22854">
    <property type="entry name" value="TRYPTOPHAN BIOSYNTHESIS PROTEIN"/>
    <property type="match status" value="1"/>
</dbReference>
<dbReference type="Pfam" id="PF00218">
    <property type="entry name" value="IGPS"/>
    <property type="match status" value="1"/>
</dbReference>
<dbReference type="SUPFAM" id="SSF51366">
    <property type="entry name" value="Ribulose-phoshate binding barrel"/>
    <property type="match status" value="1"/>
</dbReference>
<dbReference type="PROSITE" id="PS00614">
    <property type="entry name" value="IGPS"/>
    <property type="match status" value="1"/>
</dbReference>
<comment type="catalytic activity">
    <reaction>
        <text>1-(2-carboxyphenylamino)-1-deoxy-D-ribulose 5-phosphate + H(+) = (1S,2R)-1-C-(indol-3-yl)glycerol 3-phosphate + CO2 + H2O</text>
        <dbReference type="Rhea" id="RHEA:23476"/>
        <dbReference type="ChEBI" id="CHEBI:15377"/>
        <dbReference type="ChEBI" id="CHEBI:15378"/>
        <dbReference type="ChEBI" id="CHEBI:16526"/>
        <dbReference type="ChEBI" id="CHEBI:58613"/>
        <dbReference type="ChEBI" id="CHEBI:58866"/>
        <dbReference type="EC" id="4.1.1.48"/>
    </reaction>
</comment>
<comment type="pathway">
    <text>Amino-acid biosynthesis; L-tryptophan biosynthesis; L-tryptophan from chorismate: step 4/5.</text>
</comment>
<comment type="similarity">
    <text evidence="1">Belongs to the TrpC family.</text>
</comment>
<protein>
    <recommendedName>
        <fullName>Indole-3-glycerol phosphate synthase</fullName>
        <shortName>IGPS</shortName>
        <ecNumber>4.1.1.48</ecNumber>
    </recommendedName>
</protein>
<gene>
    <name type="primary">trpC</name>
    <name type="ordered locus">APE_2546</name>
</gene>
<evidence type="ECO:0000305" key="1"/>
<organism>
    <name type="scientific">Aeropyrum pernix (strain ATCC 700893 / DSM 11879 / JCM 9820 / NBRC 100138 / K1)</name>
    <dbReference type="NCBI Taxonomy" id="272557"/>
    <lineage>
        <taxon>Archaea</taxon>
        <taxon>Thermoproteota</taxon>
        <taxon>Thermoprotei</taxon>
        <taxon>Desulfurococcales</taxon>
        <taxon>Desulfurococcaceae</taxon>
        <taxon>Aeropyrum</taxon>
    </lineage>
</organism>
<sequence length="261" mass="28127">MRDSFLQKAIASAKDRTSLLEEIAGNCSPKPGRPSLSSSIREWVYRVGGAVIAEYKRCSPSAGAISTLDPVSYVQATRDASAAYSVLTEPNWFCGSIELIPYFARYKPVLAKDFIVSETQIRIAACMGASAALLIMEALTPRELQELAAAASRYGVEVLVETPDASHAVEASRLAPGSIIGVNSRDLKTLRVDYEAMLREVSKAREQLPGEVILVAESGIDSPDKALKAFKAGAQAILVGTAFMKNPQLREKILAELLQIP</sequence>
<feature type="chain" id="PRO_0000154289" description="Indole-3-glycerol phosphate synthase">
    <location>
        <begin position="1"/>
        <end position="261"/>
    </location>
</feature>
<accession>Q9Y8T7</accession>
<reference key="1">
    <citation type="journal article" date="1999" name="DNA Res.">
        <title>Complete genome sequence of an aerobic hyper-thermophilic crenarchaeon, Aeropyrum pernix K1.</title>
        <authorList>
            <person name="Kawarabayasi Y."/>
            <person name="Hino Y."/>
            <person name="Horikawa H."/>
            <person name="Yamazaki S."/>
            <person name="Haikawa Y."/>
            <person name="Jin-no K."/>
            <person name="Takahashi M."/>
            <person name="Sekine M."/>
            <person name="Baba S."/>
            <person name="Ankai A."/>
            <person name="Kosugi H."/>
            <person name="Hosoyama A."/>
            <person name="Fukui S."/>
            <person name="Nagai Y."/>
            <person name="Nishijima K."/>
            <person name="Nakazawa H."/>
            <person name="Takamiya M."/>
            <person name="Masuda S."/>
            <person name="Funahashi T."/>
            <person name="Tanaka T."/>
            <person name="Kudoh Y."/>
            <person name="Yamazaki J."/>
            <person name="Kushida N."/>
            <person name="Oguchi A."/>
            <person name="Aoki K."/>
            <person name="Kubota K."/>
            <person name="Nakamura Y."/>
            <person name="Nomura N."/>
            <person name="Sako Y."/>
            <person name="Kikuchi H."/>
        </authorList>
    </citation>
    <scope>NUCLEOTIDE SEQUENCE [LARGE SCALE GENOMIC DNA]</scope>
    <source>
        <strain>ATCC 700893 / DSM 11879 / JCM 9820 / NBRC 100138 / K1</strain>
    </source>
</reference>
<keyword id="KW-0028">Amino-acid biosynthesis</keyword>
<keyword id="KW-0057">Aromatic amino acid biosynthesis</keyword>
<keyword id="KW-0210">Decarboxylase</keyword>
<keyword id="KW-0456">Lyase</keyword>
<keyword id="KW-1185">Reference proteome</keyword>
<keyword id="KW-0822">Tryptophan biosynthesis</keyword>
<name>TRPC_AERPE</name>
<proteinExistence type="inferred from homology"/>